<reference key="1">
    <citation type="journal article" date="2007" name="PLoS ONE">
        <title>A glimpse of streptococcal toxic shock syndrome from comparative genomics of S. suis 2 Chinese isolates.</title>
        <authorList>
            <person name="Chen C."/>
            <person name="Tang J."/>
            <person name="Dong W."/>
            <person name="Wang C."/>
            <person name="Feng Y."/>
            <person name="Wang J."/>
            <person name="Zheng F."/>
            <person name="Pan X."/>
            <person name="Liu D."/>
            <person name="Li M."/>
            <person name="Song Y."/>
            <person name="Zhu X."/>
            <person name="Sun H."/>
            <person name="Feng T."/>
            <person name="Guo Z."/>
            <person name="Ju A."/>
            <person name="Ge J."/>
            <person name="Dong Y."/>
            <person name="Sun W."/>
            <person name="Jiang Y."/>
            <person name="Wang J."/>
            <person name="Yan J."/>
            <person name="Yang H."/>
            <person name="Wang X."/>
            <person name="Gao G.F."/>
            <person name="Yang R."/>
            <person name="Wang J."/>
            <person name="Yu J."/>
        </authorList>
    </citation>
    <scope>NUCLEOTIDE SEQUENCE [LARGE SCALE GENOMIC DNA]</scope>
    <source>
        <strain>98HAH33</strain>
    </source>
</reference>
<evidence type="ECO:0000255" key="1">
    <source>
        <dbReference type="HAMAP-Rule" id="MF_00092"/>
    </source>
</evidence>
<organism>
    <name type="scientific">Streptococcus suis (strain 98HAH33)</name>
    <dbReference type="NCBI Taxonomy" id="391296"/>
    <lineage>
        <taxon>Bacteria</taxon>
        <taxon>Bacillati</taxon>
        <taxon>Bacillota</taxon>
        <taxon>Bacilli</taxon>
        <taxon>Lactobacillales</taxon>
        <taxon>Streptococcaceae</taxon>
        <taxon>Streptococcus</taxon>
    </lineage>
</organism>
<protein>
    <recommendedName>
        <fullName evidence="1">Endonuclease MutS2</fullName>
        <ecNumber evidence="1">3.1.-.-</ecNumber>
    </recommendedName>
    <alternativeName>
        <fullName evidence="1">Ribosome-associated protein quality control-upstream factor</fullName>
        <shortName evidence="1">RQC-upstream factor</shortName>
        <shortName evidence="1">RqcU</shortName>
        <ecNumber evidence="1">3.6.4.-</ecNumber>
    </alternativeName>
</protein>
<dbReference type="EC" id="3.1.-.-" evidence="1"/>
<dbReference type="EC" id="3.6.4.-" evidence="1"/>
<dbReference type="EMBL" id="CP000408">
    <property type="protein sequence ID" value="ABP91390.1"/>
    <property type="molecule type" value="Genomic_DNA"/>
</dbReference>
<dbReference type="SMR" id="A4VZ51"/>
<dbReference type="KEGG" id="ssv:SSU98_0232"/>
<dbReference type="HOGENOM" id="CLU_011252_2_1_9"/>
<dbReference type="GO" id="GO:0005524">
    <property type="term" value="F:ATP binding"/>
    <property type="evidence" value="ECO:0007669"/>
    <property type="project" value="UniProtKB-UniRule"/>
</dbReference>
<dbReference type="GO" id="GO:0016887">
    <property type="term" value="F:ATP hydrolysis activity"/>
    <property type="evidence" value="ECO:0007669"/>
    <property type="project" value="InterPro"/>
</dbReference>
<dbReference type="GO" id="GO:0140664">
    <property type="term" value="F:ATP-dependent DNA damage sensor activity"/>
    <property type="evidence" value="ECO:0007669"/>
    <property type="project" value="InterPro"/>
</dbReference>
<dbReference type="GO" id="GO:0004519">
    <property type="term" value="F:endonuclease activity"/>
    <property type="evidence" value="ECO:0007669"/>
    <property type="project" value="UniProtKB-UniRule"/>
</dbReference>
<dbReference type="GO" id="GO:0030983">
    <property type="term" value="F:mismatched DNA binding"/>
    <property type="evidence" value="ECO:0007669"/>
    <property type="project" value="InterPro"/>
</dbReference>
<dbReference type="GO" id="GO:0043023">
    <property type="term" value="F:ribosomal large subunit binding"/>
    <property type="evidence" value="ECO:0007669"/>
    <property type="project" value="UniProtKB-UniRule"/>
</dbReference>
<dbReference type="GO" id="GO:0019843">
    <property type="term" value="F:rRNA binding"/>
    <property type="evidence" value="ECO:0007669"/>
    <property type="project" value="UniProtKB-UniRule"/>
</dbReference>
<dbReference type="GO" id="GO:0006298">
    <property type="term" value="P:mismatch repair"/>
    <property type="evidence" value="ECO:0007669"/>
    <property type="project" value="InterPro"/>
</dbReference>
<dbReference type="GO" id="GO:0045910">
    <property type="term" value="P:negative regulation of DNA recombination"/>
    <property type="evidence" value="ECO:0007669"/>
    <property type="project" value="InterPro"/>
</dbReference>
<dbReference type="GO" id="GO:0072344">
    <property type="term" value="P:rescue of stalled ribosome"/>
    <property type="evidence" value="ECO:0007669"/>
    <property type="project" value="UniProtKB-UniRule"/>
</dbReference>
<dbReference type="CDD" id="cd03280">
    <property type="entry name" value="ABC_MutS2"/>
    <property type="match status" value="1"/>
</dbReference>
<dbReference type="FunFam" id="3.40.50.300:FF:000830">
    <property type="entry name" value="Endonuclease MutS2"/>
    <property type="match status" value="1"/>
</dbReference>
<dbReference type="Gene3D" id="3.30.1370.110">
    <property type="match status" value="1"/>
</dbReference>
<dbReference type="Gene3D" id="3.40.50.300">
    <property type="entry name" value="P-loop containing nucleotide triphosphate hydrolases"/>
    <property type="match status" value="1"/>
</dbReference>
<dbReference type="HAMAP" id="MF_00092">
    <property type="entry name" value="MutS2"/>
    <property type="match status" value="1"/>
</dbReference>
<dbReference type="InterPro" id="IPR000432">
    <property type="entry name" value="DNA_mismatch_repair_MutS_C"/>
</dbReference>
<dbReference type="InterPro" id="IPR007696">
    <property type="entry name" value="DNA_mismatch_repair_MutS_core"/>
</dbReference>
<dbReference type="InterPro" id="IPR036187">
    <property type="entry name" value="DNA_mismatch_repair_MutS_sf"/>
</dbReference>
<dbReference type="InterPro" id="IPR046893">
    <property type="entry name" value="MSSS"/>
</dbReference>
<dbReference type="InterPro" id="IPR045076">
    <property type="entry name" value="MutS"/>
</dbReference>
<dbReference type="InterPro" id="IPR005747">
    <property type="entry name" value="MutS2"/>
</dbReference>
<dbReference type="InterPro" id="IPR027417">
    <property type="entry name" value="P-loop_NTPase"/>
</dbReference>
<dbReference type="InterPro" id="IPR002625">
    <property type="entry name" value="Smr_dom"/>
</dbReference>
<dbReference type="InterPro" id="IPR036063">
    <property type="entry name" value="Smr_dom_sf"/>
</dbReference>
<dbReference type="NCBIfam" id="TIGR01069">
    <property type="entry name" value="mutS2"/>
    <property type="match status" value="1"/>
</dbReference>
<dbReference type="PANTHER" id="PTHR48466">
    <property type="entry name" value="OS10G0509000 PROTEIN-RELATED"/>
    <property type="match status" value="1"/>
</dbReference>
<dbReference type="PANTHER" id="PTHR48466:SF1">
    <property type="entry name" value="SMR DOMAIN-CONTAINING PROTEIN"/>
    <property type="match status" value="1"/>
</dbReference>
<dbReference type="Pfam" id="PF20297">
    <property type="entry name" value="MSSS"/>
    <property type="match status" value="1"/>
</dbReference>
<dbReference type="Pfam" id="PF00488">
    <property type="entry name" value="MutS_V"/>
    <property type="match status" value="1"/>
</dbReference>
<dbReference type="Pfam" id="PF01713">
    <property type="entry name" value="Smr"/>
    <property type="match status" value="1"/>
</dbReference>
<dbReference type="PIRSF" id="PIRSF005814">
    <property type="entry name" value="MutS_YshD"/>
    <property type="match status" value="1"/>
</dbReference>
<dbReference type="SMART" id="SM00534">
    <property type="entry name" value="MUTSac"/>
    <property type="match status" value="1"/>
</dbReference>
<dbReference type="SMART" id="SM00533">
    <property type="entry name" value="MUTSd"/>
    <property type="match status" value="1"/>
</dbReference>
<dbReference type="SMART" id="SM00463">
    <property type="entry name" value="SMR"/>
    <property type="match status" value="1"/>
</dbReference>
<dbReference type="SUPFAM" id="SSF48334">
    <property type="entry name" value="DNA repair protein MutS, domain III"/>
    <property type="match status" value="1"/>
</dbReference>
<dbReference type="SUPFAM" id="SSF52540">
    <property type="entry name" value="P-loop containing nucleoside triphosphate hydrolases"/>
    <property type="match status" value="1"/>
</dbReference>
<dbReference type="SUPFAM" id="SSF160443">
    <property type="entry name" value="SMR domain-like"/>
    <property type="match status" value="1"/>
</dbReference>
<dbReference type="PROSITE" id="PS00486">
    <property type="entry name" value="DNA_MISMATCH_REPAIR_2"/>
    <property type="match status" value="1"/>
</dbReference>
<dbReference type="PROSITE" id="PS50828">
    <property type="entry name" value="SMR"/>
    <property type="match status" value="1"/>
</dbReference>
<gene>
    <name evidence="1" type="primary">mutS2</name>
    <name evidence="1" type="synonym">rqcU</name>
    <name type="ordered locus">SSU98_0232</name>
</gene>
<keyword id="KW-0067">ATP-binding</keyword>
<keyword id="KW-0238">DNA-binding</keyword>
<keyword id="KW-0255">Endonuclease</keyword>
<keyword id="KW-0378">Hydrolase</keyword>
<keyword id="KW-0540">Nuclease</keyword>
<keyword id="KW-0547">Nucleotide-binding</keyword>
<keyword id="KW-0694">RNA-binding</keyword>
<keyword id="KW-0699">rRNA-binding</keyword>
<proteinExistence type="inferred from homology"/>
<name>MUTS2_STRS2</name>
<comment type="function">
    <text evidence="1">Endonuclease that is involved in the suppression of homologous recombination and thus may have a key role in the control of bacterial genetic diversity.</text>
</comment>
<comment type="function">
    <text evidence="1">Acts as a ribosome collision sensor, splitting the ribosome into its 2 subunits. Detects stalled/collided 70S ribosomes which it binds and splits by an ATP-hydrolysis driven conformational change. Acts upstream of the ribosome quality control system (RQC), a ribosome-associated complex that mediates the extraction of incompletely synthesized nascent chains from stalled ribosomes and their subsequent degradation. Probably generates substrates for RQC.</text>
</comment>
<comment type="subunit">
    <text evidence="1">Homodimer. Binds to stalled ribosomes, contacting rRNA.</text>
</comment>
<comment type="similarity">
    <text evidence="1">Belongs to the DNA mismatch repair MutS family. MutS2 subfamily.</text>
</comment>
<accession>A4VZ51</accession>
<feature type="chain" id="PRO_1000093402" description="Endonuclease MutS2">
    <location>
        <begin position="1"/>
        <end position="778"/>
    </location>
</feature>
<feature type="domain" description="Smr" evidence="1">
    <location>
        <begin position="703"/>
        <end position="778"/>
    </location>
</feature>
<feature type="binding site" evidence="1">
    <location>
        <begin position="329"/>
        <end position="336"/>
    </location>
    <ligand>
        <name>ATP</name>
        <dbReference type="ChEBI" id="CHEBI:30616"/>
    </ligand>
</feature>
<sequence length="778" mass="87678">MNNKIIETLEFHKVRQKIEPYLLTEQGFEELRQLEPMVEVHRIQQAFDELTDIAQIFVENPYFSLAATSDIGPAMRRLELDTDLNIAELLAVKKVLEVSKSLLDFYGNLENVSLSQQLDKLFEKIELFPHLQGSLQSINDAGFVEDFASEKLARIRRKIREAEDQVRQVMQDILKTKGDMLSDSILASRNGRNVLPVKNTYRNKIAGVVHDISASGSTVYIEPRAVVTLNEEISHLRAEERHELNRILQELSDMLRPHGGVIRNNAWLIGHIDFVRAKHLFARDHQAVVPKLSEKQDIALLNVRHPLIAKPVPNDLYFGSQLTAIVITGPNTGGKTIMLKTLGLTHLMAQSGLPILADKGSRVAIFKEIFADIGDEQSIEQSLSTFSSHMTHTVEILRAADQDSLILFDELGAGTDPQEGASLAMAILDDLRLRGIKTMATTHYPELKAYGIETSGIENASMEFDSNSLRPTYKFMQGVPGRSNAFEIARRLGLSDIIIQSAQSWTDTDSDVNRIIEKLESQTVESRQRLDKIRDVEQENYKMNRALRKLYDELNRERENELNKARLEAKEIVDMALAESEDILKNLHAAASLKPHQIIEAKAELKKLAPEVVDLSKNKVLKKAKIKREAKVGDDIIVTAYGQRGTLTNQLKDGRWEAQVGLIKMTLAKDEFELVKAEKAEQPKKRQVHTVKRANVRGPKARLDLRGKRYEEAMMELDEFIDQALLNNLAQVDIVHGIGTGVIREGVTKYLRRNKQIKEFGYAPQNAGGSGCTIVTFK</sequence>